<sequence>MNQIEQKWQQIWYDEKAFEVSNESSKPKYYVLEMLPYPSGKIHVGHVRNYSIGDVIARFMTMQGFNVLHPMGWDAFGLPAENAAIKNNSHPKDWTYSNIENMKKQLKSMGFSYDWSREINSCDPQYYKHEQKFFLELYERNLAYQKESLVNWDPVDNTVLANEQVVDGRGWRSGAIVEKRYLKQWFLKITDYAEELLNEIQNLKEWPEAVRSMQEKWIGKSIGANFHFKIKDNEDNTIEVFSTKPETIFGAGFIGIAFNHPIIEKLISKTPEILSFITKCSHITGSSELEKTEKEGVFTGLYVIHPFDSNIVLPVIITNFVLMDYGTGAVFGCPAHDERDHELAVKMNLPIKQVIETDIDVQKTAYTEDGILVNSDFLNGLTSNEAKQKVIDEFEKLGIGKRSVYYRLKDWGISRQRFWGCPIPMIHCEACGIVPVPCSDLPVTLPDDVSFDGHGNPLDHHPSWKHVNCPKCDKSAIRETDTFDTFFESSWYFTRYCNSNATEMTDKKACDYWLPVDKYIGGIEHAVMHLLYARFFTKVMNEQNYVSVREPFKGLFTQGMVLHATYKDEHNNWLYPEEVVKKGNEFFHKESNNRVVQGRIEKMSKSKKNLIDLVTMQEQYGADAIRLFVLSDSPPEKDLEWSASGIEGCSRFINKLEHMFEAIASLIDDVNSEINKELNRLVHFTIKHVADDIKHFVLNRAIARMRELSNAISAELNKEVVDVKTVRYGFNVIVQLLNPFIPHITEEIWQKLGNKERLYNSAFPAFDESMLELDTYVMAVQVNGKLRDTYEFKTSASEDEIKQITVNLPKVQKFLEGKEPKKIILVPRKIVNIIV</sequence>
<organism>
    <name type="scientific">Rickettsia felis (strain ATCC VR-1525 / URRWXCal2)</name>
    <name type="common">Rickettsia azadi</name>
    <dbReference type="NCBI Taxonomy" id="315456"/>
    <lineage>
        <taxon>Bacteria</taxon>
        <taxon>Pseudomonadati</taxon>
        <taxon>Pseudomonadota</taxon>
        <taxon>Alphaproteobacteria</taxon>
        <taxon>Rickettsiales</taxon>
        <taxon>Rickettsiaceae</taxon>
        <taxon>Rickettsieae</taxon>
        <taxon>Rickettsia</taxon>
        <taxon>spotted fever group</taxon>
    </lineage>
</organism>
<evidence type="ECO:0000255" key="1">
    <source>
        <dbReference type="HAMAP-Rule" id="MF_00049"/>
    </source>
</evidence>
<comment type="catalytic activity">
    <reaction evidence="1">
        <text>tRNA(Leu) + L-leucine + ATP = L-leucyl-tRNA(Leu) + AMP + diphosphate</text>
        <dbReference type="Rhea" id="RHEA:11688"/>
        <dbReference type="Rhea" id="RHEA-COMP:9613"/>
        <dbReference type="Rhea" id="RHEA-COMP:9622"/>
        <dbReference type="ChEBI" id="CHEBI:30616"/>
        <dbReference type="ChEBI" id="CHEBI:33019"/>
        <dbReference type="ChEBI" id="CHEBI:57427"/>
        <dbReference type="ChEBI" id="CHEBI:78442"/>
        <dbReference type="ChEBI" id="CHEBI:78494"/>
        <dbReference type="ChEBI" id="CHEBI:456215"/>
        <dbReference type="EC" id="6.1.1.4"/>
    </reaction>
</comment>
<comment type="subcellular location">
    <subcellularLocation>
        <location evidence="1">Cytoplasm</location>
    </subcellularLocation>
</comment>
<comment type="similarity">
    <text evidence="1">Belongs to the class-I aminoacyl-tRNA synthetase family.</text>
</comment>
<reference key="1">
    <citation type="journal article" date="2005" name="PLoS Biol.">
        <title>The genome sequence of Rickettsia felis identifies the first putative conjugative plasmid in an obligate intracellular parasite.</title>
        <authorList>
            <person name="Ogata H."/>
            <person name="Renesto P."/>
            <person name="Audic S."/>
            <person name="Robert C."/>
            <person name="Blanc G."/>
            <person name="Fournier P.-E."/>
            <person name="Parinello H."/>
            <person name="Claverie J.-M."/>
            <person name="Raoult D."/>
        </authorList>
    </citation>
    <scope>NUCLEOTIDE SEQUENCE [LARGE SCALE GENOMIC DNA]</scope>
    <source>
        <strain>ATCC VR-1525 / URRWXCal2</strain>
    </source>
</reference>
<protein>
    <recommendedName>
        <fullName evidence="1">Leucine--tRNA ligase</fullName>
        <ecNumber evidence="1">6.1.1.4</ecNumber>
    </recommendedName>
    <alternativeName>
        <fullName evidence="1">Leucyl-tRNA synthetase</fullName>
        <shortName evidence="1">LeuRS</shortName>
    </alternativeName>
</protein>
<feature type="chain" id="PRO_0000277916" description="Leucine--tRNA ligase">
    <location>
        <begin position="1"/>
        <end position="835"/>
    </location>
</feature>
<feature type="short sequence motif" description="'HIGH' region">
    <location>
        <begin position="36"/>
        <end position="46"/>
    </location>
</feature>
<feature type="short sequence motif" description="'KMSKS' region">
    <location>
        <begin position="602"/>
        <end position="606"/>
    </location>
</feature>
<feature type="binding site" evidence="1">
    <location>
        <position position="605"/>
    </location>
    <ligand>
        <name>ATP</name>
        <dbReference type="ChEBI" id="CHEBI:30616"/>
    </ligand>
</feature>
<gene>
    <name evidence="1" type="primary">leuS</name>
    <name type="ordered locus">RF_0651</name>
</gene>
<accession>Q4ULS1</accession>
<dbReference type="EC" id="6.1.1.4" evidence="1"/>
<dbReference type="EMBL" id="CP000053">
    <property type="protein sequence ID" value="AAY61502.1"/>
    <property type="molecule type" value="Genomic_DNA"/>
</dbReference>
<dbReference type="SMR" id="Q4ULS1"/>
<dbReference type="STRING" id="315456.RF_0651"/>
<dbReference type="KEGG" id="rfe:RF_0651"/>
<dbReference type="eggNOG" id="COG0495">
    <property type="taxonomic scope" value="Bacteria"/>
</dbReference>
<dbReference type="HOGENOM" id="CLU_004427_0_0_5"/>
<dbReference type="OrthoDB" id="9810365at2"/>
<dbReference type="Proteomes" id="UP000008548">
    <property type="component" value="Chromosome"/>
</dbReference>
<dbReference type="GO" id="GO:0005737">
    <property type="term" value="C:cytoplasm"/>
    <property type="evidence" value="ECO:0007669"/>
    <property type="project" value="UniProtKB-SubCell"/>
</dbReference>
<dbReference type="GO" id="GO:0002161">
    <property type="term" value="F:aminoacyl-tRNA deacylase activity"/>
    <property type="evidence" value="ECO:0007669"/>
    <property type="project" value="InterPro"/>
</dbReference>
<dbReference type="GO" id="GO:0005524">
    <property type="term" value="F:ATP binding"/>
    <property type="evidence" value="ECO:0007669"/>
    <property type="project" value="UniProtKB-UniRule"/>
</dbReference>
<dbReference type="GO" id="GO:0004823">
    <property type="term" value="F:leucine-tRNA ligase activity"/>
    <property type="evidence" value="ECO:0007669"/>
    <property type="project" value="UniProtKB-UniRule"/>
</dbReference>
<dbReference type="GO" id="GO:0006429">
    <property type="term" value="P:leucyl-tRNA aminoacylation"/>
    <property type="evidence" value="ECO:0007669"/>
    <property type="project" value="UniProtKB-UniRule"/>
</dbReference>
<dbReference type="CDD" id="cd07958">
    <property type="entry name" value="Anticodon_Ia_Leu_BEm"/>
    <property type="match status" value="1"/>
</dbReference>
<dbReference type="CDD" id="cd00812">
    <property type="entry name" value="LeuRS_core"/>
    <property type="match status" value="1"/>
</dbReference>
<dbReference type="FunFam" id="1.10.730.10:FF:000002">
    <property type="entry name" value="Leucine--tRNA ligase"/>
    <property type="match status" value="1"/>
</dbReference>
<dbReference type="FunFam" id="3.10.20.590:FF:000001">
    <property type="entry name" value="Leucine--tRNA ligase"/>
    <property type="match status" value="1"/>
</dbReference>
<dbReference type="FunFam" id="3.40.50.620:FF:000003">
    <property type="entry name" value="Leucine--tRNA ligase"/>
    <property type="match status" value="1"/>
</dbReference>
<dbReference type="FunFam" id="3.40.50.620:FF:000051">
    <property type="entry name" value="Leucine--tRNA ligase"/>
    <property type="match status" value="1"/>
</dbReference>
<dbReference type="Gene3D" id="2.20.28.290">
    <property type="match status" value="1"/>
</dbReference>
<dbReference type="Gene3D" id="3.10.20.590">
    <property type="match status" value="1"/>
</dbReference>
<dbReference type="Gene3D" id="3.40.50.620">
    <property type="entry name" value="HUPs"/>
    <property type="match status" value="2"/>
</dbReference>
<dbReference type="Gene3D" id="1.10.730.10">
    <property type="entry name" value="Isoleucyl-tRNA Synthetase, Domain 1"/>
    <property type="match status" value="1"/>
</dbReference>
<dbReference type="HAMAP" id="MF_00049_B">
    <property type="entry name" value="Leu_tRNA_synth_B"/>
    <property type="match status" value="1"/>
</dbReference>
<dbReference type="InterPro" id="IPR001412">
    <property type="entry name" value="aa-tRNA-synth_I_CS"/>
</dbReference>
<dbReference type="InterPro" id="IPR002300">
    <property type="entry name" value="aa-tRNA-synth_Ia"/>
</dbReference>
<dbReference type="InterPro" id="IPR002302">
    <property type="entry name" value="Leu-tRNA-ligase"/>
</dbReference>
<dbReference type="InterPro" id="IPR025709">
    <property type="entry name" value="Leu_tRNA-synth_edit"/>
</dbReference>
<dbReference type="InterPro" id="IPR013155">
    <property type="entry name" value="M/V/L/I-tRNA-synth_anticd-bd"/>
</dbReference>
<dbReference type="InterPro" id="IPR015413">
    <property type="entry name" value="Methionyl/Leucyl_tRNA_Synth"/>
</dbReference>
<dbReference type="InterPro" id="IPR014729">
    <property type="entry name" value="Rossmann-like_a/b/a_fold"/>
</dbReference>
<dbReference type="InterPro" id="IPR009080">
    <property type="entry name" value="tRNAsynth_Ia_anticodon-bd"/>
</dbReference>
<dbReference type="InterPro" id="IPR009008">
    <property type="entry name" value="Val/Leu/Ile-tRNA-synth_edit"/>
</dbReference>
<dbReference type="NCBIfam" id="TIGR00396">
    <property type="entry name" value="leuS_bact"/>
    <property type="match status" value="1"/>
</dbReference>
<dbReference type="PANTHER" id="PTHR43740:SF2">
    <property type="entry name" value="LEUCINE--TRNA LIGASE, MITOCHONDRIAL"/>
    <property type="match status" value="1"/>
</dbReference>
<dbReference type="PANTHER" id="PTHR43740">
    <property type="entry name" value="LEUCYL-TRNA SYNTHETASE"/>
    <property type="match status" value="1"/>
</dbReference>
<dbReference type="Pfam" id="PF08264">
    <property type="entry name" value="Anticodon_1"/>
    <property type="match status" value="1"/>
</dbReference>
<dbReference type="Pfam" id="PF00133">
    <property type="entry name" value="tRNA-synt_1"/>
    <property type="match status" value="2"/>
</dbReference>
<dbReference type="Pfam" id="PF13603">
    <property type="entry name" value="tRNA-synt_1_2"/>
    <property type="match status" value="1"/>
</dbReference>
<dbReference type="Pfam" id="PF09334">
    <property type="entry name" value="tRNA-synt_1g"/>
    <property type="match status" value="1"/>
</dbReference>
<dbReference type="PRINTS" id="PR00985">
    <property type="entry name" value="TRNASYNTHLEU"/>
</dbReference>
<dbReference type="SUPFAM" id="SSF47323">
    <property type="entry name" value="Anticodon-binding domain of a subclass of class I aminoacyl-tRNA synthetases"/>
    <property type="match status" value="1"/>
</dbReference>
<dbReference type="SUPFAM" id="SSF52374">
    <property type="entry name" value="Nucleotidylyl transferase"/>
    <property type="match status" value="1"/>
</dbReference>
<dbReference type="SUPFAM" id="SSF50677">
    <property type="entry name" value="ValRS/IleRS/LeuRS editing domain"/>
    <property type="match status" value="1"/>
</dbReference>
<dbReference type="PROSITE" id="PS00178">
    <property type="entry name" value="AA_TRNA_LIGASE_I"/>
    <property type="match status" value="1"/>
</dbReference>
<proteinExistence type="inferred from homology"/>
<keyword id="KW-0030">Aminoacyl-tRNA synthetase</keyword>
<keyword id="KW-0067">ATP-binding</keyword>
<keyword id="KW-0963">Cytoplasm</keyword>
<keyword id="KW-0436">Ligase</keyword>
<keyword id="KW-0547">Nucleotide-binding</keyword>
<keyword id="KW-0648">Protein biosynthesis</keyword>
<name>SYL_RICFE</name>